<feature type="signal peptide" evidence="1">
    <location>
        <begin position="1"/>
        <end position="23"/>
    </location>
</feature>
<feature type="peptide" id="PRO_0000004955" description="Andropin">
    <location>
        <begin position="24"/>
        <end position="60"/>
    </location>
</feature>
<feature type="sequence variant" description="In strain: New Caledonia.">
    <original>G</original>
    <variation>N</variation>
    <location>
        <position position="45"/>
    </location>
</feature>
<feature type="sequence variant" description="In strain: New Caledonia.">
    <original>L</original>
    <variation>S</variation>
    <location>
        <position position="58"/>
    </location>
</feature>
<reference key="1">
    <citation type="journal article" date="2002" name="J. Mol. Evol.">
        <title>Rapid evolution of the male-specific antibacterial protein andropin gene in Drosophila.</title>
        <authorList>
            <person name="Date-Ito A."/>
            <person name="Kasahara K."/>
            <person name="Sawai H."/>
            <person name="Chigusa S.I."/>
        </authorList>
    </citation>
    <scope>NUCLEOTIDE SEQUENCE [GENOMIC DNA]</scope>
    <source>
        <strain>Australia</strain>
        <strain>New Caledonia</strain>
    </source>
</reference>
<organism>
    <name type="scientific">Drosophila simulans</name>
    <name type="common">Fruit fly</name>
    <dbReference type="NCBI Taxonomy" id="7240"/>
    <lineage>
        <taxon>Eukaryota</taxon>
        <taxon>Metazoa</taxon>
        <taxon>Ecdysozoa</taxon>
        <taxon>Arthropoda</taxon>
        <taxon>Hexapoda</taxon>
        <taxon>Insecta</taxon>
        <taxon>Pterygota</taxon>
        <taxon>Neoptera</taxon>
        <taxon>Endopterygota</taxon>
        <taxon>Diptera</taxon>
        <taxon>Brachycera</taxon>
        <taxon>Muscomorpha</taxon>
        <taxon>Ephydroidea</taxon>
        <taxon>Drosophilidae</taxon>
        <taxon>Drosophila</taxon>
        <taxon>Sophophora</taxon>
    </lineage>
</organism>
<proteinExistence type="evidence at transcript level"/>
<evidence type="ECO:0000255" key="1"/>
<evidence type="ECO:0000305" key="2"/>
<dbReference type="EMBL" id="AB047039">
    <property type="protein sequence ID" value="BAB78544.1"/>
    <property type="molecule type" value="Genomic_DNA"/>
</dbReference>
<dbReference type="EMBL" id="AB047040">
    <property type="protein sequence ID" value="BAB78545.1"/>
    <property type="molecule type" value="Genomic_DNA"/>
</dbReference>
<dbReference type="SMR" id="Q8WSV4"/>
<dbReference type="OrthoDB" id="7865560at2759"/>
<dbReference type="GO" id="GO:0005576">
    <property type="term" value="C:extracellular region"/>
    <property type="evidence" value="ECO:0000250"/>
    <property type="project" value="UniProtKB"/>
</dbReference>
<dbReference type="GO" id="GO:0050830">
    <property type="term" value="P:defense response to Gram-positive bacterium"/>
    <property type="evidence" value="ECO:0000250"/>
    <property type="project" value="UniProtKB"/>
</dbReference>
<dbReference type="GO" id="GO:0045087">
    <property type="term" value="P:innate immune response"/>
    <property type="evidence" value="ECO:0007669"/>
    <property type="project" value="UniProtKB-KW"/>
</dbReference>
<dbReference type="GO" id="GO:0006962">
    <property type="term" value="P:male-specific antibacterial humoral response"/>
    <property type="evidence" value="ECO:0000250"/>
    <property type="project" value="UniProtKB"/>
</dbReference>
<dbReference type="InterPro" id="IPR000875">
    <property type="entry name" value="Cecropin"/>
</dbReference>
<dbReference type="Pfam" id="PF00272">
    <property type="entry name" value="Cecropin"/>
    <property type="match status" value="1"/>
</dbReference>
<protein>
    <recommendedName>
        <fullName>Andropin</fullName>
    </recommendedName>
</protein>
<comment type="function">
    <text>Male-specific peptide with moderate activity against Gram-positive bacteria.</text>
</comment>
<comment type="subcellular location">
    <subcellularLocation>
        <location>Secreted</location>
    </subcellularLocation>
</comment>
<comment type="tissue specificity">
    <text>Ejaculatory duct of adult males.</text>
</comment>
<comment type="induction">
    <text>In response to mating.</text>
</comment>
<comment type="similarity">
    <text evidence="2">Belongs to the andropin family.</text>
</comment>
<name>ANDP_DROSI</name>
<gene>
    <name type="primary">Anp</name>
</gene>
<keyword id="KW-0044">Antibiotic</keyword>
<keyword id="KW-0929">Antimicrobial</keyword>
<keyword id="KW-0391">Immunity</keyword>
<keyword id="KW-0399">Innate immunity</keyword>
<keyword id="KW-0964">Secreted</keyword>
<keyword id="KW-0732">Signal</keyword>
<sequence length="60" mass="6431">MKYFVVLVVLALILAIAVGPSDAVFIDILDKMENAIHKAAQAGIGIAKPIENMILPKLTK</sequence>
<accession>Q8WSV4</accession>
<accession>Q8WSV5</accession>